<reference key="1">
    <citation type="journal article" date="2007" name="Genome Biol.">
        <title>Genome analysis and genome-wide proteomics of Thermococcus gammatolerans, the most radioresistant organism known amongst the Archaea.</title>
        <authorList>
            <person name="Zivanovic Y."/>
            <person name="Armengaud J."/>
            <person name="Lagorce A."/>
            <person name="Leplat C."/>
            <person name="Guerin P."/>
            <person name="Dutertre M."/>
            <person name="Anthouard V."/>
            <person name="Forterre P."/>
            <person name="Wincker P."/>
            <person name="Confalonieri F."/>
        </authorList>
    </citation>
    <scope>NUCLEOTIDE SEQUENCE [LARGE SCALE GENOMIC DNA]</scope>
    <source>
        <strain>DSM 15229 / JCM 11827 / EJ3</strain>
    </source>
</reference>
<evidence type="ECO:0000255" key="1">
    <source>
        <dbReference type="HAMAP-Rule" id="MF_01369"/>
    </source>
</evidence>
<evidence type="ECO:0000305" key="2"/>
<sequence length="86" mass="9941">MDPYKVIIRPLVTEKAVSLIEKENKLTFIVDRKATKQDIKRAVEEMFNVKVEKVNTLITMKGEKKAYVKLRPEYNASEIAARLGLF</sequence>
<accession>C5A284</accession>
<proteinExistence type="inferred from homology"/>
<name>RL23_THEGJ</name>
<protein>
    <recommendedName>
        <fullName evidence="1">Large ribosomal subunit protein uL23</fullName>
    </recommendedName>
    <alternativeName>
        <fullName evidence="2">50S ribosomal protein L23</fullName>
    </alternativeName>
</protein>
<organism>
    <name type="scientific">Thermococcus gammatolerans (strain DSM 15229 / JCM 11827 / EJ3)</name>
    <dbReference type="NCBI Taxonomy" id="593117"/>
    <lineage>
        <taxon>Archaea</taxon>
        <taxon>Methanobacteriati</taxon>
        <taxon>Methanobacteriota</taxon>
        <taxon>Thermococci</taxon>
        <taxon>Thermococcales</taxon>
        <taxon>Thermococcaceae</taxon>
        <taxon>Thermococcus</taxon>
    </lineage>
</organism>
<keyword id="KW-1185">Reference proteome</keyword>
<keyword id="KW-0687">Ribonucleoprotein</keyword>
<keyword id="KW-0689">Ribosomal protein</keyword>
<keyword id="KW-0694">RNA-binding</keyword>
<keyword id="KW-0699">rRNA-binding</keyword>
<comment type="function">
    <text evidence="1">Binds to 23S rRNA. One of the proteins that surrounds the polypeptide exit tunnel on the outside of the ribosome.</text>
</comment>
<comment type="subunit">
    <text evidence="1">Part of the 50S ribosomal subunit. Contacts protein L29.</text>
</comment>
<comment type="similarity">
    <text evidence="1">Belongs to the universal ribosomal protein uL23 family.</text>
</comment>
<feature type="chain" id="PRO_1000215047" description="Large ribosomal subunit protein uL23">
    <location>
        <begin position="1"/>
        <end position="86"/>
    </location>
</feature>
<gene>
    <name evidence="1" type="primary">rpl23</name>
    <name type="ordered locus">TGAM_2001</name>
</gene>
<dbReference type="EMBL" id="CP001398">
    <property type="protein sequence ID" value="ACS34503.1"/>
    <property type="molecule type" value="Genomic_DNA"/>
</dbReference>
<dbReference type="RefSeq" id="WP_015859606.1">
    <property type="nucleotide sequence ID" value="NC_012804.1"/>
</dbReference>
<dbReference type="SMR" id="C5A284"/>
<dbReference type="STRING" id="593117.TGAM_2001"/>
<dbReference type="PaxDb" id="593117-TGAM_2001"/>
<dbReference type="GeneID" id="7987058"/>
<dbReference type="KEGG" id="tga:TGAM_2001"/>
<dbReference type="PATRIC" id="fig|593117.10.peg.2011"/>
<dbReference type="eggNOG" id="arCOG04072">
    <property type="taxonomic scope" value="Archaea"/>
</dbReference>
<dbReference type="HOGENOM" id="CLU_037562_4_2_2"/>
<dbReference type="OrthoDB" id="7751at2157"/>
<dbReference type="Proteomes" id="UP000001488">
    <property type="component" value="Chromosome"/>
</dbReference>
<dbReference type="GO" id="GO:1990904">
    <property type="term" value="C:ribonucleoprotein complex"/>
    <property type="evidence" value="ECO:0007669"/>
    <property type="project" value="UniProtKB-KW"/>
</dbReference>
<dbReference type="GO" id="GO:0005840">
    <property type="term" value="C:ribosome"/>
    <property type="evidence" value="ECO:0007669"/>
    <property type="project" value="UniProtKB-KW"/>
</dbReference>
<dbReference type="GO" id="GO:0019843">
    <property type="term" value="F:rRNA binding"/>
    <property type="evidence" value="ECO:0007669"/>
    <property type="project" value="UniProtKB-UniRule"/>
</dbReference>
<dbReference type="GO" id="GO:0003735">
    <property type="term" value="F:structural constituent of ribosome"/>
    <property type="evidence" value="ECO:0007669"/>
    <property type="project" value="InterPro"/>
</dbReference>
<dbReference type="GO" id="GO:0006412">
    <property type="term" value="P:translation"/>
    <property type="evidence" value="ECO:0007669"/>
    <property type="project" value="UniProtKB-UniRule"/>
</dbReference>
<dbReference type="FunFam" id="3.30.70.330:FF:001084">
    <property type="entry name" value="50S ribosomal protein L23"/>
    <property type="match status" value="1"/>
</dbReference>
<dbReference type="Gene3D" id="3.30.70.330">
    <property type="match status" value="1"/>
</dbReference>
<dbReference type="HAMAP" id="MF_01369_A">
    <property type="entry name" value="Ribosomal_uL23_A"/>
    <property type="match status" value="1"/>
</dbReference>
<dbReference type="HAMAP" id="MF_01369_B">
    <property type="entry name" value="Ribosomal_uL23_B"/>
    <property type="match status" value="1"/>
</dbReference>
<dbReference type="InterPro" id="IPR012677">
    <property type="entry name" value="Nucleotide-bd_a/b_plait_sf"/>
</dbReference>
<dbReference type="InterPro" id="IPR019985">
    <property type="entry name" value="Ribosomal_uL23"/>
</dbReference>
<dbReference type="InterPro" id="IPR013025">
    <property type="entry name" value="Ribosomal_uL23-like"/>
</dbReference>
<dbReference type="InterPro" id="IPR012678">
    <property type="entry name" value="Ribosomal_uL23/eL15/eS24_sf"/>
</dbReference>
<dbReference type="NCBIfam" id="NF011118">
    <property type="entry name" value="PRK14548.1"/>
    <property type="match status" value="1"/>
</dbReference>
<dbReference type="NCBIfam" id="TIGR03636">
    <property type="entry name" value="uL23_arch"/>
    <property type="match status" value="1"/>
</dbReference>
<dbReference type="PANTHER" id="PTHR11620">
    <property type="entry name" value="60S RIBOSOMAL PROTEIN L23A"/>
    <property type="match status" value="1"/>
</dbReference>
<dbReference type="Pfam" id="PF00276">
    <property type="entry name" value="Ribosomal_L23"/>
    <property type="match status" value="1"/>
</dbReference>
<dbReference type="SUPFAM" id="SSF54189">
    <property type="entry name" value="Ribosomal proteins S24e, L23 and L15e"/>
    <property type="match status" value="1"/>
</dbReference>